<proteinExistence type="evidence at transcript level"/>
<protein>
    <recommendedName>
        <fullName>Hemoglobin subunit epsilon</fullName>
    </recommendedName>
    <alternativeName>
        <fullName>Epsilon-globin</fullName>
    </alternativeName>
    <alternativeName>
        <fullName>Hemoglobin epsilon chain</fullName>
    </alternativeName>
</protein>
<evidence type="ECO:0000250" key="1">
    <source>
        <dbReference type="UniProtKB" id="P02100"/>
    </source>
</evidence>
<evidence type="ECO:0000255" key="2">
    <source>
        <dbReference type="PROSITE-ProRule" id="PRU00238"/>
    </source>
</evidence>
<comment type="function">
    <text>The epsilon chain is a beta-type chain of early mammalian embryonic hemoglobin.</text>
</comment>
<comment type="subunit">
    <text>Heterotetramer of two alpha chains and two epsilon chains in early embryonic hemoglobin Gower-2; two zeta chains and two epsilon chains in early embryonic hemoglobin Gower-1.</text>
</comment>
<comment type="tissue specificity">
    <text>Red blood cells.</text>
</comment>
<comment type="similarity">
    <text evidence="2">Belongs to the globin family.</text>
</comment>
<keyword id="KW-0349">Heme</keyword>
<keyword id="KW-0408">Iron</keyword>
<keyword id="KW-0479">Metal-binding</keyword>
<keyword id="KW-0561">Oxygen transport</keyword>
<keyword id="KW-0597">Phosphoprotein</keyword>
<keyword id="KW-0813">Transport</keyword>
<accession>P51440</accession>
<organism>
    <name type="scientific">Lagothrix lagotricha</name>
    <name type="common">Brown woolly monkey</name>
    <name type="synonym">Humboldt's woolly monkey</name>
    <dbReference type="NCBI Taxonomy" id="9519"/>
    <lineage>
        <taxon>Eukaryota</taxon>
        <taxon>Metazoa</taxon>
        <taxon>Chordata</taxon>
        <taxon>Craniata</taxon>
        <taxon>Vertebrata</taxon>
        <taxon>Euteleostomi</taxon>
        <taxon>Mammalia</taxon>
        <taxon>Eutheria</taxon>
        <taxon>Euarchontoglires</taxon>
        <taxon>Primates</taxon>
        <taxon>Haplorrhini</taxon>
        <taxon>Platyrrhini</taxon>
        <taxon>Atelidae</taxon>
        <taxon>Atelinae</taxon>
        <taxon>Lagothrix</taxon>
    </lineage>
</organism>
<name>HBE_LAGLA</name>
<sequence>MVHFTAEEKAAITSLWGKMNVEEAGGEALGRLLVVYPWTQRFFDNFGNLSSPSAILGNPKVKAHGKKVLTSFEDAIKNMDNLKTTFAKLSELHCDKLHVDPENFRLLGNVMVIILATHFGKEFTPEVQAAWQKLVSAVAIALGHKYH</sequence>
<dbReference type="EMBL" id="L25358">
    <property type="protein sequence ID" value="AAA36821.1"/>
    <property type="molecule type" value="Genomic_DNA"/>
</dbReference>
<dbReference type="SMR" id="P51440"/>
<dbReference type="GO" id="GO:0072562">
    <property type="term" value="C:blood microparticle"/>
    <property type="evidence" value="ECO:0007669"/>
    <property type="project" value="TreeGrafter"/>
</dbReference>
<dbReference type="GO" id="GO:0031838">
    <property type="term" value="C:haptoglobin-hemoglobin complex"/>
    <property type="evidence" value="ECO:0007669"/>
    <property type="project" value="TreeGrafter"/>
</dbReference>
<dbReference type="GO" id="GO:0005833">
    <property type="term" value="C:hemoglobin complex"/>
    <property type="evidence" value="ECO:0007669"/>
    <property type="project" value="InterPro"/>
</dbReference>
<dbReference type="GO" id="GO:0031720">
    <property type="term" value="F:haptoglobin binding"/>
    <property type="evidence" value="ECO:0007669"/>
    <property type="project" value="TreeGrafter"/>
</dbReference>
<dbReference type="GO" id="GO:0020037">
    <property type="term" value="F:heme binding"/>
    <property type="evidence" value="ECO:0007669"/>
    <property type="project" value="InterPro"/>
</dbReference>
<dbReference type="GO" id="GO:0031721">
    <property type="term" value="F:hemoglobin alpha binding"/>
    <property type="evidence" value="ECO:0007669"/>
    <property type="project" value="TreeGrafter"/>
</dbReference>
<dbReference type="GO" id="GO:0046872">
    <property type="term" value="F:metal ion binding"/>
    <property type="evidence" value="ECO:0007669"/>
    <property type="project" value="UniProtKB-KW"/>
</dbReference>
<dbReference type="GO" id="GO:0043177">
    <property type="term" value="F:organic acid binding"/>
    <property type="evidence" value="ECO:0007669"/>
    <property type="project" value="TreeGrafter"/>
</dbReference>
<dbReference type="GO" id="GO:0019825">
    <property type="term" value="F:oxygen binding"/>
    <property type="evidence" value="ECO:0007669"/>
    <property type="project" value="InterPro"/>
</dbReference>
<dbReference type="GO" id="GO:0005344">
    <property type="term" value="F:oxygen carrier activity"/>
    <property type="evidence" value="ECO:0007669"/>
    <property type="project" value="UniProtKB-KW"/>
</dbReference>
<dbReference type="GO" id="GO:0004601">
    <property type="term" value="F:peroxidase activity"/>
    <property type="evidence" value="ECO:0007669"/>
    <property type="project" value="TreeGrafter"/>
</dbReference>
<dbReference type="GO" id="GO:0042744">
    <property type="term" value="P:hydrogen peroxide catabolic process"/>
    <property type="evidence" value="ECO:0007669"/>
    <property type="project" value="TreeGrafter"/>
</dbReference>
<dbReference type="CDD" id="cd08925">
    <property type="entry name" value="Hb-beta-like"/>
    <property type="match status" value="1"/>
</dbReference>
<dbReference type="FunFam" id="1.10.490.10:FF:000001">
    <property type="entry name" value="Hemoglobin subunit beta"/>
    <property type="match status" value="1"/>
</dbReference>
<dbReference type="Gene3D" id="1.10.490.10">
    <property type="entry name" value="Globins"/>
    <property type="match status" value="1"/>
</dbReference>
<dbReference type="InterPro" id="IPR000971">
    <property type="entry name" value="Globin"/>
</dbReference>
<dbReference type="InterPro" id="IPR009050">
    <property type="entry name" value="Globin-like_sf"/>
</dbReference>
<dbReference type="InterPro" id="IPR012292">
    <property type="entry name" value="Globin/Proto"/>
</dbReference>
<dbReference type="InterPro" id="IPR002337">
    <property type="entry name" value="Hemoglobin_b"/>
</dbReference>
<dbReference type="InterPro" id="IPR050056">
    <property type="entry name" value="Hemoglobin_oxygen_transport"/>
</dbReference>
<dbReference type="PANTHER" id="PTHR11442">
    <property type="entry name" value="HEMOGLOBIN FAMILY MEMBER"/>
    <property type="match status" value="1"/>
</dbReference>
<dbReference type="PANTHER" id="PTHR11442:SF7">
    <property type="entry name" value="HEMOGLOBIN SUBUNIT EPSILON"/>
    <property type="match status" value="1"/>
</dbReference>
<dbReference type="Pfam" id="PF00042">
    <property type="entry name" value="Globin"/>
    <property type="match status" value="1"/>
</dbReference>
<dbReference type="PRINTS" id="PR00814">
    <property type="entry name" value="BETAHAEM"/>
</dbReference>
<dbReference type="SUPFAM" id="SSF46458">
    <property type="entry name" value="Globin-like"/>
    <property type="match status" value="1"/>
</dbReference>
<dbReference type="PROSITE" id="PS01033">
    <property type="entry name" value="GLOBIN"/>
    <property type="match status" value="1"/>
</dbReference>
<reference key="1">
    <citation type="journal article" date="1993" name="Mol. Phylogenet. Evol.">
        <title>Molecular phylogeny of the New World monkeys (Platyrrhini, primates).</title>
        <authorList>
            <person name="Schneider H."/>
            <person name="Schneider M.P.C."/>
            <person name="Sampaio I."/>
            <person name="Harada M.L."/>
            <person name="Stanhope M.J."/>
            <person name="Czekysbuaj J."/>
            <person name="Goodman M."/>
        </authorList>
    </citation>
    <scope>NUCLEOTIDE SEQUENCE [GENOMIC DNA]</scope>
    <source>
        <tissue>Lymphocyte</tissue>
    </source>
</reference>
<feature type="chain" id="PRO_0000053214" description="Hemoglobin subunit epsilon">
    <location>
        <begin position="1"/>
        <end position="147"/>
    </location>
</feature>
<feature type="domain" description="Globin" evidence="2">
    <location>
        <begin position="3"/>
        <end position="147"/>
    </location>
</feature>
<feature type="binding site" description="distal binding residue" evidence="2">
    <location>
        <position position="64"/>
    </location>
    <ligand>
        <name>heme b</name>
        <dbReference type="ChEBI" id="CHEBI:60344"/>
    </ligand>
    <ligandPart>
        <name>Fe</name>
        <dbReference type="ChEBI" id="CHEBI:18248"/>
    </ligandPart>
</feature>
<feature type="binding site" description="proximal binding residue" evidence="2">
    <location>
        <position position="93"/>
    </location>
    <ligand>
        <name>heme b</name>
        <dbReference type="ChEBI" id="CHEBI:60344"/>
    </ligand>
    <ligandPart>
        <name>Fe</name>
        <dbReference type="ChEBI" id="CHEBI:18248"/>
    </ligandPart>
</feature>
<feature type="modified residue" description="Phosphoserine" evidence="1">
    <location>
        <position position="14"/>
    </location>
</feature>
<feature type="modified residue" description="Phosphoserine" evidence="1">
    <location>
        <position position="51"/>
    </location>
</feature>
<gene>
    <name type="primary">HBE1</name>
</gene>